<name>LYAR_MOUSE</name>
<organism>
    <name type="scientific">Mus musculus</name>
    <name type="common">Mouse</name>
    <dbReference type="NCBI Taxonomy" id="10090"/>
    <lineage>
        <taxon>Eukaryota</taxon>
        <taxon>Metazoa</taxon>
        <taxon>Chordata</taxon>
        <taxon>Craniata</taxon>
        <taxon>Vertebrata</taxon>
        <taxon>Euteleostomi</taxon>
        <taxon>Mammalia</taxon>
        <taxon>Eutheria</taxon>
        <taxon>Euarchontoglires</taxon>
        <taxon>Glires</taxon>
        <taxon>Rodentia</taxon>
        <taxon>Myomorpha</taxon>
        <taxon>Muroidea</taxon>
        <taxon>Muridae</taxon>
        <taxon>Murinae</taxon>
        <taxon>Mus</taxon>
        <taxon>Mus</taxon>
    </lineage>
</organism>
<proteinExistence type="evidence at protein level"/>
<evidence type="ECO:0000250" key="1">
    <source>
        <dbReference type="UniProtKB" id="Q9NX58"/>
    </source>
</evidence>
<evidence type="ECO:0000255" key="2"/>
<evidence type="ECO:0000255" key="3">
    <source>
        <dbReference type="PROSITE-ProRule" id="PRU01145"/>
    </source>
</evidence>
<evidence type="ECO:0000256" key="4">
    <source>
        <dbReference type="SAM" id="MobiDB-lite"/>
    </source>
</evidence>
<evidence type="ECO:0000269" key="5">
    <source>
    </source>
</evidence>
<evidence type="ECO:0000269" key="6">
    <source>
    </source>
</evidence>
<evidence type="ECO:0000269" key="7">
    <source>
    </source>
</evidence>
<evidence type="ECO:0000269" key="8">
    <source>
    </source>
</evidence>
<evidence type="ECO:0000269" key="9">
    <source>
    </source>
</evidence>
<evidence type="ECO:0000269" key="10">
    <source>
    </source>
</evidence>
<evidence type="ECO:0000269" key="11">
    <source>
    </source>
</evidence>
<evidence type="ECO:0000303" key="12">
    <source>
    </source>
</evidence>
<evidence type="ECO:0000305" key="13"/>
<evidence type="ECO:0007829" key="14">
    <source>
        <dbReference type="PDB" id="1WJV"/>
    </source>
</evidence>
<dbReference type="EMBL" id="S60885">
    <property type="protein sequence ID" value="AAB26644.1"/>
    <property type="molecule type" value="mRNA"/>
</dbReference>
<dbReference type="EMBL" id="AK006373">
    <property type="protein sequence ID" value="BAB24554.1"/>
    <property type="molecule type" value="mRNA"/>
</dbReference>
<dbReference type="CCDS" id="CCDS19253.1"/>
<dbReference type="PIR" id="A40683">
    <property type="entry name" value="A40683"/>
</dbReference>
<dbReference type="RefSeq" id="NP_001411350.1">
    <property type="nucleotide sequence ID" value="NM_001424421.1"/>
</dbReference>
<dbReference type="RefSeq" id="NP_001411351.1">
    <property type="nucleotide sequence ID" value="NM_001424422.1"/>
</dbReference>
<dbReference type="RefSeq" id="NP_001411352.1">
    <property type="nucleotide sequence ID" value="NM_001424423.1"/>
</dbReference>
<dbReference type="RefSeq" id="NP_001411353.1">
    <property type="nucleotide sequence ID" value="NM_001424424.1"/>
</dbReference>
<dbReference type="RefSeq" id="NP_001411354.1">
    <property type="nucleotide sequence ID" value="NM_001424425.1"/>
</dbReference>
<dbReference type="RefSeq" id="NP_079557.2">
    <property type="nucleotide sequence ID" value="NM_025281.4"/>
</dbReference>
<dbReference type="RefSeq" id="XP_006503822.1">
    <property type="nucleotide sequence ID" value="XM_006503759.1"/>
</dbReference>
<dbReference type="RefSeq" id="XP_006503823.1">
    <property type="nucleotide sequence ID" value="XM_006503760.1"/>
</dbReference>
<dbReference type="RefSeq" id="XP_006503824.1">
    <property type="nucleotide sequence ID" value="XM_006503761.1"/>
</dbReference>
<dbReference type="RefSeq" id="XP_006503825.1">
    <property type="nucleotide sequence ID" value="XM_006503762.1"/>
</dbReference>
<dbReference type="RefSeq" id="XP_006503826.1">
    <property type="nucleotide sequence ID" value="XM_006503763.1"/>
</dbReference>
<dbReference type="RefSeq" id="XP_006503827.1">
    <property type="nucleotide sequence ID" value="XM_006503764.3"/>
</dbReference>
<dbReference type="PDB" id="1WJV">
    <property type="method" value="NMR"/>
    <property type="chains" value="A=1-66"/>
</dbReference>
<dbReference type="PDBsum" id="1WJV"/>
<dbReference type="BMRB" id="Q08288"/>
<dbReference type="SMR" id="Q08288"/>
<dbReference type="BioGRID" id="201254">
    <property type="interactions" value="6"/>
</dbReference>
<dbReference type="FunCoup" id="Q08288">
    <property type="interactions" value="2026"/>
</dbReference>
<dbReference type="IntAct" id="Q08288">
    <property type="interactions" value="2"/>
</dbReference>
<dbReference type="MINT" id="Q08288"/>
<dbReference type="STRING" id="10090.ENSMUSP00000084791"/>
<dbReference type="DrugBank" id="DB09130">
    <property type="generic name" value="Copper"/>
</dbReference>
<dbReference type="GlyGen" id="Q08288">
    <property type="glycosylation" value="1 site, 1 O-linked glycan (1 site)"/>
</dbReference>
<dbReference type="iPTMnet" id="Q08288"/>
<dbReference type="PhosphoSitePlus" id="Q08288"/>
<dbReference type="SwissPalm" id="Q08288"/>
<dbReference type="PaxDb" id="10090-ENSMUSP00000084791"/>
<dbReference type="PeptideAtlas" id="Q08288"/>
<dbReference type="ProteomicsDB" id="287278"/>
<dbReference type="Pumba" id="Q08288"/>
<dbReference type="Antibodypedia" id="22562">
    <property type="antibodies" value="229 antibodies from 29 providers"/>
</dbReference>
<dbReference type="DNASU" id="17089"/>
<dbReference type="Ensembl" id="ENSMUST00000087514.9">
    <property type="protein sequence ID" value="ENSMUSP00000084791.3"/>
    <property type="gene ID" value="ENSMUSG00000067367.10"/>
</dbReference>
<dbReference type="Ensembl" id="ENSMUST00000114106.8">
    <property type="protein sequence ID" value="ENSMUSP00000109741.2"/>
    <property type="gene ID" value="ENSMUSG00000067367.10"/>
</dbReference>
<dbReference type="GeneID" id="17089"/>
<dbReference type="KEGG" id="mmu:17089"/>
<dbReference type="UCSC" id="uc008xgh.2">
    <property type="organism name" value="mouse"/>
</dbReference>
<dbReference type="AGR" id="MGI:107470"/>
<dbReference type="CTD" id="55646"/>
<dbReference type="MGI" id="MGI:107470">
    <property type="gene designation" value="Lyar"/>
</dbReference>
<dbReference type="VEuPathDB" id="HostDB:ENSMUSG00000067367"/>
<dbReference type="eggNOG" id="KOG2186">
    <property type="taxonomic scope" value="Eukaryota"/>
</dbReference>
<dbReference type="GeneTree" id="ENSGT00390000003477"/>
<dbReference type="HOGENOM" id="CLU_057137_0_1_1"/>
<dbReference type="InParanoid" id="Q08288"/>
<dbReference type="OMA" id="QNWIKNS"/>
<dbReference type="OrthoDB" id="21474at2759"/>
<dbReference type="PhylomeDB" id="Q08288"/>
<dbReference type="TreeFam" id="TF314925"/>
<dbReference type="BioGRID-ORCS" id="17089">
    <property type="hits" value="3 hits in 76 CRISPR screens"/>
</dbReference>
<dbReference type="CD-CODE" id="DE1E139C">
    <property type="entry name" value="Chromatoid body"/>
</dbReference>
<dbReference type="ChiTaRS" id="Lyar">
    <property type="organism name" value="mouse"/>
</dbReference>
<dbReference type="EvolutionaryTrace" id="Q08288"/>
<dbReference type="PRO" id="PR:Q08288"/>
<dbReference type="Proteomes" id="UP000000589">
    <property type="component" value="Chromosome 5"/>
</dbReference>
<dbReference type="RNAct" id="Q08288">
    <property type="molecule type" value="protein"/>
</dbReference>
<dbReference type="Bgee" id="ENSMUSG00000067367">
    <property type="expression patterns" value="Expressed in otic placode and 271 other cell types or tissues"/>
</dbReference>
<dbReference type="ExpressionAtlas" id="Q08288">
    <property type="expression patterns" value="baseline and differential"/>
</dbReference>
<dbReference type="GO" id="GO:0005737">
    <property type="term" value="C:cytoplasm"/>
    <property type="evidence" value="ECO:0007669"/>
    <property type="project" value="UniProtKB-SubCell"/>
</dbReference>
<dbReference type="GO" id="GO:0005730">
    <property type="term" value="C:nucleolus"/>
    <property type="evidence" value="ECO:0000314"/>
    <property type="project" value="MGI"/>
</dbReference>
<dbReference type="GO" id="GO:0005654">
    <property type="term" value="C:nucleoplasm"/>
    <property type="evidence" value="ECO:0007669"/>
    <property type="project" value="Ensembl"/>
</dbReference>
<dbReference type="GO" id="GO:0005634">
    <property type="term" value="C:nucleus"/>
    <property type="evidence" value="ECO:0000250"/>
    <property type="project" value="UniProtKB"/>
</dbReference>
<dbReference type="GO" id="GO:0001750">
    <property type="term" value="C:photoreceptor outer segment"/>
    <property type="evidence" value="ECO:0000314"/>
    <property type="project" value="UniProtKB"/>
</dbReference>
<dbReference type="GO" id="GO:0003677">
    <property type="term" value="F:DNA binding"/>
    <property type="evidence" value="ECO:0000250"/>
    <property type="project" value="UniProtKB"/>
</dbReference>
<dbReference type="GO" id="GO:0140297">
    <property type="term" value="F:DNA-binding transcription factor binding"/>
    <property type="evidence" value="ECO:0007669"/>
    <property type="project" value="Ensembl"/>
</dbReference>
<dbReference type="GO" id="GO:0042802">
    <property type="term" value="F:identical protein binding"/>
    <property type="evidence" value="ECO:0007669"/>
    <property type="project" value="Ensembl"/>
</dbReference>
<dbReference type="GO" id="GO:0140416">
    <property type="term" value="F:transcription regulator inhibitor activity"/>
    <property type="evidence" value="ECO:0007669"/>
    <property type="project" value="Ensembl"/>
</dbReference>
<dbReference type="GO" id="GO:0008270">
    <property type="term" value="F:zinc ion binding"/>
    <property type="evidence" value="ECO:0007669"/>
    <property type="project" value="UniProtKB-KW"/>
</dbReference>
<dbReference type="GO" id="GO:0048821">
    <property type="term" value="P:erythrocyte development"/>
    <property type="evidence" value="ECO:0000250"/>
    <property type="project" value="UniProtKB"/>
</dbReference>
<dbReference type="GO" id="GO:0045087">
    <property type="term" value="P:innate immune response"/>
    <property type="evidence" value="ECO:0007669"/>
    <property type="project" value="UniProtKB-KW"/>
</dbReference>
<dbReference type="GO" id="GO:0045824">
    <property type="term" value="P:negative regulation of innate immune response"/>
    <property type="evidence" value="ECO:0007669"/>
    <property type="project" value="Ensembl"/>
</dbReference>
<dbReference type="GO" id="GO:0000122">
    <property type="term" value="P:negative regulation of transcription by RNA polymerase II"/>
    <property type="evidence" value="ECO:0000315"/>
    <property type="project" value="UniProtKB"/>
</dbReference>
<dbReference type="GO" id="GO:0050766">
    <property type="term" value="P:positive regulation of phagocytosis"/>
    <property type="evidence" value="ECO:0000314"/>
    <property type="project" value="UniProtKB"/>
</dbReference>
<dbReference type="GO" id="GO:0045943">
    <property type="term" value="P:positive regulation of transcription by RNA polymerase I"/>
    <property type="evidence" value="ECO:0007669"/>
    <property type="project" value="Ensembl"/>
</dbReference>
<dbReference type="GO" id="GO:0006364">
    <property type="term" value="P:rRNA processing"/>
    <property type="evidence" value="ECO:0000250"/>
    <property type="project" value="UniProtKB"/>
</dbReference>
<dbReference type="FunFam" id="1.10.10.2100:FF:000002">
    <property type="entry name" value="cell growth-regulating nucleolar protein-like"/>
    <property type="match status" value="1"/>
</dbReference>
<dbReference type="FunFam" id="3.30.1490.490:FF:000001">
    <property type="entry name" value="cell growth-regulating nucleolar protein-like"/>
    <property type="match status" value="1"/>
</dbReference>
<dbReference type="Gene3D" id="1.10.10.2100">
    <property type="match status" value="1"/>
</dbReference>
<dbReference type="Gene3D" id="3.30.1490.490">
    <property type="match status" value="1"/>
</dbReference>
<dbReference type="InterPro" id="IPR039999">
    <property type="entry name" value="LYAR"/>
</dbReference>
<dbReference type="InterPro" id="IPR014898">
    <property type="entry name" value="Znf_C2H2_LYAR"/>
</dbReference>
<dbReference type="InterPro" id="IPR036236">
    <property type="entry name" value="Znf_C2H2_sf"/>
</dbReference>
<dbReference type="PANTHER" id="PTHR13100:SF10">
    <property type="entry name" value="CELL GROWTH-REGULATING NUCLEOLAR PROTEIN"/>
    <property type="match status" value="1"/>
</dbReference>
<dbReference type="PANTHER" id="PTHR13100">
    <property type="entry name" value="CELL GROWTH-REGULATING NUCLEOLAR PROTEIN LYAR"/>
    <property type="match status" value="1"/>
</dbReference>
<dbReference type="Pfam" id="PF08790">
    <property type="entry name" value="zf-LYAR"/>
    <property type="match status" value="1"/>
</dbReference>
<dbReference type="SUPFAM" id="SSF57667">
    <property type="entry name" value="beta-beta-alpha zinc fingers"/>
    <property type="match status" value="2"/>
</dbReference>
<dbReference type="PROSITE" id="PS51804">
    <property type="entry name" value="ZF_C2HC_LYAR"/>
    <property type="match status" value="2"/>
</dbReference>
<feature type="chain" id="PRO_0000084529" description="Cell growth-regulating nucleolar protein">
    <location>
        <begin position="1"/>
        <end position="388"/>
    </location>
</feature>
<feature type="zinc finger region" description="C2HC LYAR-type 1" evidence="3">
    <location>
        <begin position="1"/>
        <end position="26"/>
    </location>
</feature>
<feature type="zinc finger region" description="C2HC LYAR-type 2" evidence="3">
    <location>
        <begin position="28"/>
        <end position="52"/>
    </location>
</feature>
<feature type="region of interest" description="Disordered" evidence="4">
    <location>
        <begin position="140"/>
        <end position="318"/>
    </location>
</feature>
<feature type="coiled-coil region" evidence="2">
    <location>
        <begin position="174"/>
        <end position="216"/>
    </location>
</feature>
<feature type="compositionally biased region" description="Low complexity" evidence="4">
    <location>
        <begin position="140"/>
        <end position="152"/>
    </location>
</feature>
<feature type="compositionally biased region" description="Basic and acidic residues" evidence="4">
    <location>
        <begin position="179"/>
        <end position="193"/>
    </location>
</feature>
<feature type="compositionally biased region" description="Basic and acidic residues" evidence="4">
    <location>
        <begin position="200"/>
        <end position="213"/>
    </location>
</feature>
<feature type="compositionally biased region" description="Basic and acidic residues" evidence="4">
    <location>
        <begin position="297"/>
        <end position="314"/>
    </location>
</feature>
<feature type="binding site" evidence="3">
    <location>
        <position position="6"/>
    </location>
    <ligand>
        <name>Zn(2+)</name>
        <dbReference type="ChEBI" id="CHEBI:29105"/>
        <label>1</label>
    </ligand>
</feature>
<feature type="binding site" evidence="3">
    <location>
        <position position="9"/>
    </location>
    <ligand>
        <name>Zn(2+)</name>
        <dbReference type="ChEBI" id="CHEBI:29105"/>
        <label>1</label>
    </ligand>
</feature>
<feature type="binding site" evidence="3">
    <location>
        <position position="21"/>
    </location>
    <ligand>
        <name>Zn(2+)</name>
        <dbReference type="ChEBI" id="CHEBI:29105"/>
        <label>1</label>
    </ligand>
</feature>
<feature type="binding site" evidence="3">
    <location>
        <position position="25"/>
    </location>
    <ligand>
        <name>Zn(2+)</name>
        <dbReference type="ChEBI" id="CHEBI:29105"/>
        <label>1</label>
    </ligand>
</feature>
<feature type="binding site" evidence="3">
    <location>
        <position position="33"/>
    </location>
    <ligand>
        <name>Zn(2+)</name>
        <dbReference type="ChEBI" id="CHEBI:29105"/>
        <label>2</label>
    </ligand>
</feature>
<feature type="binding site" evidence="3">
    <location>
        <position position="36"/>
    </location>
    <ligand>
        <name>Zn(2+)</name>
        <dbReference type="ChEBI" id="CHEBI:29105"/>
        <label>2</label>
    </ligand>
</feature>
<feature type="binding site" evidence="3">
    <location>
        <position position="48"/>
    </location>
    <ligand>
        <name>Zn(2+)</name>
        <dbReference type="ChEBI" id="CHEBI:29105"/>
        <label>2</label>
    </ligand>
</feature>
<feature type="binding site" evidence="3">
    <location>
        <position position="51"/>
    </location>
    <ligand>
        <name>Zn(2+)</name>
        <dbReference type="ChEBI" id="CHEBI:29105"/>
        <label>2</label>
    </ligand>
</feature>
<feature type="cross-link" description="Glycyl lysine isopeptide (Lys-Gly) (interchain with G-Cter in SUMO2)" evidence="1">
    <location>
        <position position="14"/>
    </location>
</feature>
<feature type="cross-link" description="Glycyl lysine isopeptide (Lys-Gly) (interchain with G-Cter in SUMO2)" evidence="1">
    <location>
        <position position="204"/>
    </location>
</feature>
<feature type="sequence conflict" description="In Ref. 1; AAB26644." evidence="13" ref="1">
    <original>H</original>
    <variation>Q</variation>
    <location>
        <position position="21"/>
    </location>
</feature>
<feature type="sequence conflict" description="In Ref. 1; AAB26644." evidence="13" ref="1">
    <original>R</original>
    <variation>I</variation>
    <location>
        <position position="109"/>
    </location>
</feature>
<feature type="sequence conflict" description="In Ref. 1; AAB26644." evidence="13" ref="1">
    <original>EAAEA</original>
    <variation>DGADG</variation>
    <location>
        <begin position="234"/>
        <end position="238"/>
    </location>
</feature>
<feature type="sequence conflict" description="In Ref. 1; AAB26644." evidence="13" ref="1">
    <original>A</original>
    <variation>R</variation>
    <location>
        <position position="267"/>
    </location>
</feature>
<feature type="sequence conflict" description="In Ref. 2; BAB24554." evidence="13" ref="2">
    <original>N</original>
    <variation>K</variation>
    <location>
        <position position="354"/>
    </location>
</feature>
<feature type="sequence conflict" description="In Ref. 1; AAB26644." evidence="13" ref="1">
    <original>HHTS</original>
    <variation>TSHH</variation>
    <location>
        <begin position="356"/>
        <end position="359"/>
    </location>
</feature>
<feature type="strand" evidence="14">
    <location>
        <begin position="3"/>
        <end position="9"/>
    </location>
</feature>
<feature type="strand" evidence="14">
    <location>
        <begin position="12"/>
        <end position="14"/>
    </location>
</feature>
<feature type="helix" evidence="14">
    <location>
        <begin position="17"/>
        <end position="24"/>
    </location>
</feature>
<feature type="strand" evidence="14">
    <location>
        <begin position="30"/>
        <end position="33"/>
    </location>
</feature>
<feature type="turn" evidence="14">
    <location>
        <begin position="34"/>
        <end position="37"/>
    </location>
</feature>
<feature type="strand" evidence="14">
    <location>
        <begin position="38"/>
        <end position="41"/>
    </location>
</feature>
<feature type="helix" evidence="14">
    <location>
        <begin position="42"/>
        <end position="44"/>
    </location>
</feature>
<feature type="turn" evidence="14">
    <location>
        <begin position="45"/>
        <end position="47"/>
    </location>
</feature>
<gene>
    <name type="primary">Lyar</name>
</gene>
<reference key="1">
    <citation type="journal article" date="1993" name="Genes Dev.">
        <title>LYAR, a novel nucleolar protein with zinc finger DNA-binding motifs, is involved in cell growth regulation.</title>
        <authorList>
            <person name="Su L."/>
            <person name="Hershberger R.J."/>
            <person name="Weissman I.L."/>
        </authorList>
    </citation>
    <scope>NUCLEOTIDE SEQUENCE [MRNA]</scope>
    <scope>SUBCELLULAR LOCATION</scope>
</reference>
<reference key="2">
    <citation type="journal article" date="2005" name="Science">
        <title>The transcriptional landscape of the mammalian genome.</title>
        <authorList>
            <person name="Carninci P."/>
            <person name="Kasukawa T."/>
            <person name="Katayama S."/>
            <person name="Gough J."/>
            <person name="Frith M.C."/>
            <person name="Maeda N."/>
            <person name="Oyama R."/>
            <person name="Ravasi T."/>
            <person name="Lenhard B."/>
            <person name="Wells C."/>
            <person name="Kodzius R."/>
            <person name="Shimokawa K."/>
            <person name="Bajic V.B."/>
            <person name="Brenner S.E."/>
            <person name="Batalov S."/>
            <person name="Forrest A.R."/>
            <person name="Zavolan M."/>
            <person name="Davis M.J."/>
            <person name="Wilming L.G."/>
            <person name="Aidinis V."/>
            <person name="Allen J.E."/>
            <person name="Ambesi-Impiombato A."/>
            <person name="Apweiler R."/>
            <person name="Aturaliya R.N."/>
            <person name="Bailey T.L."/>
            <person name="Bansal M."/>
            <person name="Baxter L."/>
            <person name="Beisel K.W."/>
            <person name="Bersano T."/>
            <person name="Bono H."/>
            <person name="Chalk A.M."/>
            <person name="Chiu K.P."/>
            <person name="Choudhary V."/>
            <person name="Christoffels A."/>
            <person name="Clutterbuck D.R."/>
            <person name="Crowe M.L."/>
            <person name="Dalla E."/>
            <person name="Dalrymple B.P."/>
            <person name="de Bono B."/>
            <person name="Della Gatta G."/>
            <person name="di Bernardo D."/>
            <person name="Down T."/>
            <person name="Engstrom P."/>
            <person name="Fagiolini M."/>
            <person name="Faulkner G."/>
            <person name="Fletcher C.F."/>
            <person name="Fukushima T."/>
            <person name="Furuno M."/>
            <person name="Futaki S."/>
            <person name="Gariboldi M."/>
            <person name="Georgii-Hemming P."/>
            <person name="Gingeras T.R."/>
            <person name="Gojobori T."/>
            <person name="Green R.E."/>
            <person name="Gustincich S."/>
            <person name="Harbers M."/>
            <person name="Hayashi Y."/>
            <person name="Hensch T.K."/>
            <person name="Hirokawa N."/>
            <person name="Hill D."/>
            <person name="Huminiecki L."/>
            <person name="Iacono M."/>
            <person name="Ikeo K."/>
            <person name="Iwama A."/>
            <person name="Ishikawa T."/>
            <person name="Jakt M."/>
            <person name="Kanapin A."/>
            <person name="Katoh M."/>
            <person name="Kawasawa Y."/>
            <person name="Kelso J."/>
            <person name="Kitamura H."/>
            <person name="Kitano H."/>
            <person name="Kollias G."/>
            <person name="Krishnan S.P."/>
            <person name="Kruger A."/>
            <person name="Kummerfeld S.K."/>
            <person name="Kurochkin I.V."/>
            <person name="Lareau L.F."/>
            <person name="Lazarevic D."/>
            <person name="Lipovich L."/>
            <person name="Liu J."/>
            <person name="Liuni S."/>
            <person name="McWilliam S."/>
            <person name="Madan Babu M."/>
            <person name="Madera M."/>
            <person name="Marchionni L."/>
            <person name="Matsuda H."/>
            <person name="Matsuzawa S."/>
            <person name="Miki H."/>
            <person name="Mignone F."/>
            <person name="Miyake S."/>
            <person name="Morris K."/>
            <person name="Mottagui-Tabar S."/>
            <person name="Mulder N."/>
            <person name="Nakano N."/>
            <person name="Nakauchi H."/>
            <person name="Ng P."/>
            <person name="Nilsson R."/>
            <person name="Nishiguchi S."/>
            <person name="Nishikawa S."/>
            <person name="Nori F."/>
            <person name="Ohara O."/>
            <person name="Okazaki Y."/>
            <person name="Orlando V."/>
            <person name="Pang K.C."/>
            <person name="Pavan W.J."/>
            <person name="Pavesi G."/>
            <person name="Pesole G."/>
            <person name="Petrovsky N."/>
            <person name="Piazza S."/>
            <person name="Reed J."/>
            <person name="Reid J.F."/>
            <person name="Ring B.Z."/>
            <person name="Ringwald M."/>
            <person name="Rost B."/>
            <person name="Ruan Y."/>
            <person name="Salzberg S.L."/>
            <person name="Sandelin A."/>
            <person name="Schneider C."/>
            <person name="Schoenbach C."/>
            <person name="Sekiguchi K."/>
            <person name="Semple C.A."/>
            <person name="Seno S."/>
            <person name="Sessa L."/>
            <person name="Sheng Y."/>
            <person name="Shibata Y."/>
            <person name="Shimada H."/>
            <person name="Shimada K."/>
            <person name="Silva D."/>
            <person name="Sinclair B."/>
            <person name="Sperling S."/>
            <person name="Stupka E."/>
            <person name="Sugiura K."/>
            <person name="Sultana R."/>
            <person name="Takenaka Y."/>
            <person name="Taki K."/>
            <person name="Tammoja K."/>
            <person name="Tan S.L."/>
            <person name="Tang S."/>
            <person name="Taylor M.S."/>
            <person name="Tegner J."/>
            <person name="Teichmann S.A."/>
            <person name="Ueda H.R."/>
            <person name="van Nimwegen E."/>
            <person name="Verardo R."/>
            <person name="Wei C.L."/>
            <person name="Yagi K."/>
            <person name="Yamanishi H."/>
            <person name="Zabarovsky E."/>
            <person name="Zhu S."/>
            <person name="Zimmer A."/>
            <person name="Hide W."/>
            <person name="Bult C."/>
            <person name="Grimmond S.M."/>
            <person name="Teasdale R.D."/>
            <person name="Liu E.T."/>
            <person name="Brusic V."/>
            <person name="Quackenbush J."/>
            <person name="Wahlestedt C."/>
            <person name="Mattick J.S."/>
            <person name="Hume D.A."/>
            <person name="Kai C."/>
            <person name="Sasaki D."/>
            <person name="Tomaru Y."/>
            <person name="Fukuda S."/>
            <person name="Kanamori-Katayama M."/>
            <person name="Suzuki M."/>
            <person name="Aoki J."/>
            <person name="Arakawa T."/>
            <person name="Iida J."/>
            <person name="Imamura K."/>
            <person name="Itoh M."/>
            <person name="Kato T."/>
            <person name="Kawaji H."/>
            <person name="Kawagashira N."/>
            <person name="Kawashima T."/>
            <person name="Kojima M."/>
            <person name="Kondo S."/>
            <person name="Konno H."/>
            <person name="Nakano K."/>
            <person name="Ninomiya N."/>
            <person name="Nishio T."/>
            <person name="Okada M."/>
            <person name="Plessy C."/>
            <person name="Shibata K."/>
            <person name="Shiraki T."/>
            <person name="Suzuki S."/>
            <person name="Tagami M."/>
            <person name="Waki K."/>
            <person name="Watahiki A."/>
            <person name="Okamura-Oho Y."/>
            <person name="Suzuki H."/>
            <person name="Kawai J."/>
            <person name="Hayashizaki Y."/>
        </authorList>
    </citation>
    <scope>NUCLEOTIDE SEQUENCE [LARGE SCALE MRNA]</scope>
    <source>
        <strain>C57BL/6J</strain>
        <tissue>Testis</tissue>
    </source>
</reference>
<reference key="3">
    <citation type="journal article" date="2009" name="Stem Cells">
        <title>Ly-1 antibody reactive clone is an important nucleolar protein for control of self-renewal and differentiation in embryonic stem cells.</title>
        <authorList>
            <person name="Li H."/>
            <person name="Wang B."/>
            <person name="Yang A."/>
            <person name="Lu R."/>
            <person name="Wang W."/>
            <person name="Zhou Y."/>
            <person name="Shi G."/>
            <person name="Kwon S.W."/>
            <person name="Zhao Y."/>
            <person name="Jin Y."/>
        </authorList>
    </citation>
    <scope>FUNCTION</scope>
    <scope>INTERACTION WITH NCL</scope>
    <scope>SUBCELLULAR LOCATION</scope>
    <scope>TISSUE SPECIFICITY</scope>
</reference>
<reference key="4">
    <citation type="journal article" date="2010" name="Cell">
        <title>A tissue-specific atlas of mouse protein phosphorylation and expression.</title>
        <authorList>
            <person name="Huttlin E.L."/>
            <person name="Jedrychowski M.P."/>
            <person name="Elias J.E."/>
            <person name="Goswami T."/>
            <person name="Rad R."/>
            <person name="Beausoleil S.A."/>
            <person name="Villen J."/>
            <person name="Haas W."/>
            <person name="Sowa M.E."/>
            <person name="Gygi S.P."/>
        </authorList>
    </citation>
    <scope>IDENTIFICATION BY MASS SPECTROMETRY [LARGE SCALE ANALYSIS]</scope>
    <source>
        <tissue>Pancreas</tissue>
        <tissue>Spleen</tissue>
        <tissue>Testis</tissue>
    </source>
</reference>
<reference key="5">
    <citation type="journal article" date="2010" name="J. Hum. Genet.">
        <title>Screening of genes involved in chromosome segregation during meiosis I: toward the identification of genes responsible for infertility in humans.</title>
        <authorList>
            <person name="Kogo H."/>
            <person name="Kowa-Sugiyama H."/>
            <person name="Yamada K."/>
            <person name="Bolor H."/>
            <person name="Tsutsumi M."/>
            <person name="Ohye T."/>
            <person name="Inagaki H."/>
            <person name="Taniguchi M."/>
            <person name="Toda T."/>
            <person name="Kurahashi H."/>
        </authorList>
    </citation>
    <scope>TISSUE SPECIFICITY</scope>
    <scope>DEVELOPMENTAL STAGE</scope>
</reference>
<reference key="6">
    <citation type="journal article" date="2013" name="Mol. Cells">
        <title>Expression and function of the testis-predominant protein LYAR in mice.</title>
        <authorList>
            <person name="Lee B."/>
            <person name="Jin S."/>
            <person name="Choi H."/>
            <person name="Kwon J.T."/>
            <person name="Kim J."/>
            <person name="Jeong J."/>
            <person name="Kwon Y.I."/>
            <person name="Cho C."/>
        </authorList>
    </citation>
    <scope>INTERACTION WITH NCL</scope>
    <scope>SUBCELLULAR LOCATION</scope>
    <scope>TISSUE SPECIFICITY</scope>
    <scope>DEVELOPMENTAL STAGE</scope>
    <scope>DISRUPTION PHENOTYPE</scope>
</reference>
<reference key="7">
    <citation type="journal article" date="2014" name="Mol. Cell. Biochem.">
        <title>Lyar, a cell growth-regulating zinc finger protein, was identified to be associated with cytoplasmic ribosomes in male germ and cancer cells.</title>
        <authorList>
            <person name="Yonezawa K."/>
            <person name="Sugihara Y."/>
            <person name="Oshima K."/>
            <person name="Matsuda T."/>
            <person name="Nadano D."/>
        </authorList>
    </citation>
    <scope>SUBCELLULAR LOCATION</scope>
    <scope>TISSUE SPECIFICITY</scope>
</reference>
<reference key="8">
    <citation type="journal article" date="2014" name="Nucleic Acids Res.">
        <title>Human fetal globin gene expression is regulated by LYAR.</title>
        <authorList>
            <person name="Ju J."/>
            <person name="Wang Y."/>
            <person name="Liu R."/>
            <person name="Zhang Y."/>
            <person name="Xu Z."/>
            <person name="Wang Y."/>
            <person name="Wu Y."/>
            <person name="Liu M."/>
            <person name="Cerruti L."/>
            <person name="Zou F."/>
            <person name="Ma C."/>
            <person name="Fang M."/>
            <person name="Tan R."/>
            <person name="Jane S.M."/>
            <person name="Zhao Q."/>
        </authorList>
    </citation>
    <scope>FUNCTION</scope>
</reference>
<reference key="9">
    <citation type="journal article" date="2015" name="J. Cell. Biochem.">
        <title>Lyar is a new ligand for retinal pigment epithelial phagocytosis.</title>
        <authorList>
            <person name="Guo F."/>
            <person name="Ding Y."/>
            <person name="Caberoy N.B."/>
            <person name="Alvarado G."/>
            <person name="Liu R."/>
            <person name="Shen C."/>
            <person name="Yu J."/>
            <person name="Zhou Y."/>
            <person name="Salero E."/>
            <person name="LeBlanc M.E."/>
            <person name="Wang W."/>
            <person name="Li W."/>
        </authorList>
    </citation>
    <scope>FUNCTION</scope>
    <scope>SUBCELLULAR LOCATION</scope>
    <scope>TISSUE SPECIFICITY</scope>
</reference>
<reference key="10">
    <citation type="submission" date="2006-01" db="PDB data bank">
        <title>Solution structure of the N-terminal zinc finger domain of cell growth regulating nucleolar protein Lyar.</title>
        <authorList>
            <consortium name="RIKEN structural genomics initiative (RSGI)"/>
        </authorList>
    </citation>
    <scope>STRUCTURE BY NMR OF 1-66</scope>
    <scope>ZINC-BINDING SITES</scope>
</reference>
<accession>Q08288</accession>
<accession>Q9D9X2</accession>
<keyword id="KW-0002">3D-structure</keyword>
<keyword id="KW-0966">Cell projection</keyword>
<keyword id="KW-0175">Coiled coil</keyword>
<keyword id="KW-0963">Cytoplasm</keyword>
<keyword id="KW-0238">DNA-binding</keyword>
<keyword id="KW-0391">Immunity</keyword>
<keyword id="KW-0399">Innate immunity</keyword>
<keyword id="KW-1017">Isopeptide bond</keyword>
<keyword id="KW-0479">Metal-binding</keyword>
<keyword id="KW-0539">Nucleus</keyword>
<keyword id="KW-1185">Reference proteome</keyword>
<keyword id="KW-0677">Repeat</keyword>
<keyword id="KW-0678">Repressor</keyword>
<keyword id="KW-0804">Transcription</keyword>
<keyword id="KW-0805">Transcription regulation</keyword>
<keyword id="KW-0832">Ubl conjugation</keyword>
<keyword id="KW-0862">Zinc</keyword>
<keyword id="KW-0863">Zinc-finger</keyword>
<sequence>MVFFTCNACGESVKKIQVEKHVSNCRNCECLSCIDCGKDFWGDDYKSHVKCISEGQKYGGKGYEAKTHKGDAKQQAWIQKINELIKKPNVSPKVRELLQQISAFDNVPRKKAKFQNWMKNSLKVHSDSVLEQVWDIFSEASSSEQDQQQPPSHTAKPHAEMPITKVPSAKTNGTTEEQTEAKKNKRERKEERQKNRKKEKKELKLENHQENLRGQKPKKRKKNQEAGHEAAGEEAAEASGPPEKKKAQGGQASEEGADRNGGPGEDAAEGQTKTAAGKRKRPKHSGAESGYKKKKMKLPEQPEEGEAKDHEAPSKGKFNWKGTIKAVLKQAPDNEISVKKLKKKVIAQYHAVMNDHHTSEEELLAIFNRKISRNPTFKVLKDRVKLLK</sequence>
<comment type="function">
    <text evidence="1 5 9 10">Plays a role in the maintenance of the appropriate processing of 47S/45S pre-rRNA to 32S/30S pre-rRNAs and their subsequent processing to produce 18S and 28S rRNAs (By similarity). Also acts at the level of transcription regulation. Along with PRMT5, binds embryonic globin promoter (By similarity). Represses the expression of embryonic globin Hbb-y gene (PubMed:25092918). In neuroblastoma cells, may also repress the expression of oxidative stress genes, including CHAC1, HMOX1, SLC7A11, ULBP1 and that encoding the small nucleolar RNA SNORD41 (By similarity). Preferentially binds to a DNA motif containing 5'-GGTTAT-3' (By similarity). Negatively regulates the antiviral innate immune response by targeting IRF3 and impairing its DNA-binding activity (By similarity). In addition, inhibits NF-kappa-B-mediated expression of pro-inflammatory cytokines (By similarity). Stimulates phagocytosis of photoreceptor outer segments by retinal pigment epithelial cells (PubMed:25735755). Prevents NCL self-cleavage, maintaining a normal steady-state level of NCL protein in undifferentiated embryonic stem cells (ESCs), which in turn is essential for ESC self-renewal (PubMed:19489080).</text>
</comment>
<comment type="subunit">
    <text evidence="1 5 7">Interacts with PRMT5; this interaction is direct (By similarity). Interacts with GNL2 and RPL23A (By similarity). Interacts with nucleolin/NCL; this interaction is direct (PubMed:19489080, PubMed:23212345). Interacts with phosphorylated IRF3; this interaction impairs IRF3 DNA-binding activity (By similarity).</text>
</comment>
<comment type="subcellular location">
    <subcellularLocation>
        <location evidence="5 7 8 11">Nucleus</location>
        <location evidence="5 7 8 11">Nucleolus</location>
    </subcellularLocation>
    <subcellularLocation>
        <location evidence="8">Cytoplasm</location>
    </subcellularLocation>
    <subcellularLocation>
        <location evidence="10">Cell projection</location>
        <location evidence="10">Cilium</location>
        <location evidence="10">Photoreceptor outer segment</location>
    </subcellularLocation>
    <text evidence="1 5 8 10">Component of pre-ribosomal particles, including pre-40S, pre-60S and pre-90S (By similarity). Associated with cytoplasmic ribosomes, but not polysomes, as a component of the 60S subunit (PubMed:24990247). In the retina, predominantly expressed in photoreceptor outer segments (PubMed:25735755). In the nucleolus, colocalizes with nucleolin/NCL, therefore may reside in the dense fibrillar component (DFC) (PubMed:19489080).</text>
</comment>
<comment type="tissue specificity">
    <text evidence="5 6 7 8 10">Predominantly expressed in testis, in germ cells, and at a moderate level in spleen, liver and lung (at protein level) (PubMed:19489080, PubMed:23212345, PubMed:24990247). Very high levels in spermatogonia, spermatocytes and round spermatids, but not in testicular sperm and mature sperm (at protein level) (PubMed:20339383, PubMed:23212345, PubMed:24990247). Expressed in ovary (PubMed:20339383). Expressed in the retina, including in photoreceptor outer segments (at protein level) (PubMed:25735755). Expressed in undifferentiated embryonic stem cells (PubMed:19489080, PubMed:23212345).</text>
</comment>
<comment type="developmental stage">
    <text evidence="6 7">Expressed in testis and ovary at 15.5 dpc (PubMed:20339383). May be differentially expressed during spermatogenesis. Detected first at P12, the early stage of spermatogenesis. Levels considerably increase at P16, corresponding to the development of pachytene spermatocytes (PubMed:23212345).</text>
</comment>
<comment type="domain">
    <text evidence="1">The N-terminal zinc-finger domains are required for the appropriate production of 28S rRNA and the formation of pre-60S particles.</text>
</comment>
<comment type="disruption phenotype">
    <text evidence="7">No visible phenotype. Mutant mice are fully fertile and show intact spermatogenesis.</text>
</comment>
<protein>
    <recommendedName>
        <fullName>Cell growth-regulating nucleolar protein</fullName>
    </recommendedName>
    <alternativeName>
        <fullName evidence="12">Ly1 antibody-reactive protein</fullName>
    </alternativeName>
    <alternativeName>
        <fullName>Protein expressed in male leptotene and zygotene spermatocytes 264</fullName>
        <shortName>MLZ-264</shortName>
    </alternativeName>
</protein>